<proteinExistence type="evidence at protein level"/>
<gene>
    <name evidence="1" type="primary">rpl10</name>
    <name evidence="1" type="synonym">rplP0</name>
    <name type="ordered locus">PH1999</name>
</gene>
<protein>
    <recommendedName>
        <fullName evidence="1">Large ribosomal subunit protein uL10</fullName>
    </recommendedName>
    <alternativeName>
        <fullName evidence="5">50S ribosomal protein L10</fullName>
    </alternativeName>
    <alternativeName>
        <fullName evidence="1">Acidic ribosomal protein P0 homolog</fullName>
    </alternativeName>
    <alternativeName>
        <fullName>Anchor protein P0</fullName>
    </alternativeName>
</protein>
<dbReference type="EMBL" id="BA000001">
    <property type="protein sequence ID" value="BAA31126.1"/>
    <property type="molecule type" value="Genomic_DNA"/>
</dbReference>
<dbReference type="PIR" id="G71216">
    <property type="entry name" value="G71216"/>
</dbReference>
<dbReference type="RefSeq" id="WP_010886060.1">
    <property type="nucleotide sequence ID" value="NC_000961.1"/>
</dbReference>
<dbReference type="PDB" id="3A1Y">
    <property type="method" value="X-ray"/>
    <property type="resolution" value="2.13 A"/>
    <property type="chains" value="G=1-284"/>
</dbReference>
<dbReference type="PDBsum" id="3A1Y"/>
<dbReference type="SMR" id="O74109"/>
<dbReference type="STRING" id="70601.gene:9379013"/>
<dbReference type="EnsemblBacteria" id="BAA31126">
    <property type="protein sequence ID" value="BAA31126"/>
    <property type="gene ID" value="BAA31126"/>
</dbReference>
<dbReference type="GeneID" id="1442842"/>
<dbReference type="KEGG" id="pho:PH1999"/>
<dbReference type="eggNOG" id="arCOG04288">
    <property type="taxonomic scope" value="Archaea"/>
</dbReference>
<dbReference type="OrthoDB" id="30930at2157"/>
<dbReference type="EvolutionaryTrace" id="O74109"/>
<dbReference type="Proteomes" id="UP000000752">
    <property type="component" value="Chromosome"/>
</dbReference>
<dbReference type="GO" id="GO:0022625">
    <property type="term" value="C:cytosolic large ribosomal subunit"/>
    <property type="evidence" value="ECO:0007669"/>
    <property type="project" value="TreeGrafter"/>
</dbReference>
<dbReference type="GO" id="GO:0070180">
    <property type="term" value="F:large ribosomal subunit rRNA binding"/>
    <property type="evidence" value="ECO:0007669"/>
    <property type="project" value="UniProtKB-UniRule"/>
</dbReference>
<dbReference type="GO" id="GO:0003735">
    <property type="term" value="F:structural constituent of ribosome"/>
    <property type="evidence" value="ECO:0007669"/>
    <property type="project" value="TreeGrafter"/>
</dbReference>
<dbReference type="GO" id="GO:0002181">
    <property type="term" value="P:cytoplasmic translation"/>
    <property type="evidence" value="ECO:0007669"/>
    <property type="project" value="TreeGrafter"/>
</dbReference>
<dbReference type="GO" id="GO:0000027">
    <property type="term" value="P:ribosomal large subunit assembly"/>
    <property type="evidence" value="ECO:0007669"/>
    <property type="project" value="TreeGrafter"/>
</dbReference>
<dbReference type="CDD" id="cd05795">
    <property type="entry name" value="Ribosomal_P0_L10e"/>
    <property type="match status" value="1"/>
</dbReference>
<dbReference type="FunFam" id="3.90.105.20:FF:000001">
    <property type="entry name" value="60S acidic ribosomal protein P0"/>
    <property type="match status" value="1"/>
</dbReference>
<dbReference type="Gene3D" id="3.30.70.1730">
    <property type="match status" value="1"/>
</dbReference>
<dbReference type="Gene3D" id="3.90.105.20">
    <property type="match status" value="1"/>
</dbReference>
<dbReference type="Gene3D" id="6.10.140.760">
    <property type="match status" value="1"/>
</dbReference>
<dbReference type="HAMAP" id="MF_00280">
    <property type="entry name" value="Ribosomal_uL10_arch"/>
    <property type="match status" value="1"/>
</dbReference>
<dbReference type="InterPro" id="IPR050323">
    <property type="entry name" value="Ribosomal_protein_uL10"/>
</dbReference>
<dbReference type="InterPro" id="IPR001790">
    <property type="entry name" value="Ribosomal_uL10"/>
</dbReference>
<dbReference type="InterPro" id="IPR040637">
    <property type="entry name" value="Ribosomal_uL10-like_insert"/>
</dbReference>
<dbReference type="InterPro" id="IPR043164">
    <property type="entry name" value="Ribosomal_uL10-like_insert_sf"/>
</dbReference>
<dbReference type="InterPro" id="IPR043141">
    <property type="entry name" value="Ribosomal_uL10-like_sf"/>
</dbReference>
<dbReference type="InterPro" id="IPR022909">
    <property type="entry name" value="Ribosomal_uL10_arc"/>
</dbReference>
<dbReference type="NCBIfam" id="NF003096">
    <property type="entry name" value="PRK04019.1-2"/>
    <property type="match status" value="1"/>
</dbReference>
<dbReference type="NCBIfam" id="NF003098">
    <property type="entry name" value="PRK04019.1-5"/>
    <property type="match status" value="1"/>
</dbReference>
<dbReference type="PANTHER" id="PTHR45699">
    <property type="entry name" value="60S ACIDIC RIBOSOMAL PROTEIN P0"/>
    <property type="match status" value="1"/>
</dbReference>
<dbReference type="PANTHER" id="PTHR45699:SF3">
    <property type="entry name" value="LARGE RIBOSOMAL SUBUNIT PROTEIN UL10"/>
    <property type="match status" value="1"/>
</dbReference>
<dbReference type="Pfam" id="PF00466">
    <property type="entry name" value="Ribosomal_L10"/>
    <property type="match status" value="1"/>
</dbReference>
<dbReference type="Pfam" id="PF17777">
    <property type="entry name" value="RL10P_insert"/>
    <property type="match status" value="1"/>
</dbReference>
<dbReference type="SUPFAM" id="SSF160369">
    <property type="entry name" value="Ribosomal protein L10-like"/>
    <property type="match status" value="1"/>
</dbReference>
<reference key="1">
    <citation type="journal article" date="1998" name="DNA Res.">
        <title>Complete sequence and gene organization of the genome of a hyper-thermophilic archaebacterium, Pyrococcus horikoshii OT3.</title>
        <authorList>
            <person name="Kawarabayasi Y."/>
            <person name="Sawada M."/>
            <person name="Horikawa H."/>
            <person name="Haikawa Y."/>
            <person name="Hino Y."/>
            <person name="Yamamoto S."/>
            <person name="Sekine M."/>
            <person name="Baba S."/>
            <person name="Kosugi H."/>
            <person name="Hosoyama A."/>
            <person name="Nagai Y."/>
            <person name="Sakai M."/>
            <person name="Ogura K."/>
            <person name="Otsuka R."/>
            <person name="Nakazawa H."/>
            <person name="Takamiya M."/>
            <person name="Ohfuku Y."/>
            <person name="Funahashi T."/>
            <person name="Tanaka T."/>
            <person name="Kudoh Y."/>
            <person name="Yamazaki J."/>
            <person name="Kushida N."/>
            <person name="Oguchi A."/>
            <person name="Aoki K."/>
            <person name="Yoshizawa T."/>
            <person name="Nakamura Y."/>
            <person name="Robb F.T."/>
            <person name="Horikoshi K."/>
            <person name="Masuchi Y."/>
            <person name="Shizuya H."/>
            <person name="Kikuchi H."/>
        </authorList>
    </citation>
    <scope>NUCLEOTIDE SEQUENCE [LARGE SCALE GENOMIC DNA]</scope>
    <source>
        <strain>ATCC 700860 / DSM 12428 / JCM 9974 / NBRC 100139 / OT-3</strain>
    </source>
</reference>
<reference key="2">
    <citation type="journal article" date="2007" name="J. Biol. Chem.">
        <title>Three binding sites for stalk protein dimers are generally present in ribosomes from archaeal organism.</title>
        <authorList>
            <person name="Maki Y."/>
            <person name="Hashimoto T."/>
            <person name="Zhou M."/>
            <person name="Naganuma T."/>
            <person name="Ohta J."/>
            <person name="Nomura T."/>
            <person name="Robinson C.V."/>
            <person name="Uchiumi T."/>
        </authorList>
    </citation>
    <scope>FUNCTION</scope>
    <scope>RNA-BINDING</scope>
    <scope>SUBUNIT</scope>
</reference>
<reference key="3">
    <citation type="journal article" date="2010" name="J. Biol. Chem.">
        <title>Structural basis for translation factor recruitment to the eukaryotic/archaeal ribosomes.</title>
        <authorList>
            <person name="Naganuma T."/>
            <person name="Nomura N."/>
            <person name="Yao M."/>
            <person name="Mochizuki M."/>
            <person name="Uchiumi T."/>
            <person name="Tanaka I."/>
        </authorList>
    </citation>
    <scope>X-RAY CRYSTALLOGRAPHY (2.13 ANGSTROMS) OF 1-284</scope>
    <scope>SUBUNIT</scope>
    <scope>MUTAGENESIS OF 217-LEU--ALA-224; 243-ILE--ALA-250 AND 272-ALA--LEU-279</scope>
</reference>
<comment type="function">
    <text evidence="3">Forms the large subunit's ribosomal stalk, playing a central role in the interaction of the ribosome with elongation factors; the stalk complex of P.horikoshii binds to E.coli large subunits and confers on them the ability to interact with eukaryotic elongation factors. Each succesive L12 dimer bound along the P0 spine increases the GTPase activity of elongation factors and increases translation by reconsituted ribosomes, although the first site is the most stimulatory.</text>
</comment>
<comment type="subunit">
    <text evidence="3 4">Part of the 50S ribosomal subunit, binds large rRNA. Forms the ribosomal stalk which helps the ribosome interact with GTP-bound translation factors. Forms a heptameric L10(L12)2(L12)2(L12)2 complex, where L10 forms an elongated spine to which the L12 dimers bind in a sequential fashion.</text>
</comment>
<comment type="similarity">
    <text evidence="1">Belongs to the universal ribosomal protein uL10 family.</text>
</comment>
<keyword id="KW-0002">3D-structure</keyword>
<keyword id="KW-0687">Ribonucleoprotein</keyword>
<keyword id="KW-0689">Ribosomal protein</keyword>
<keyword id="KW-0694">RNA-binding</keyword>
<keyword id="KW-0699">rRNA-binding</keyword>
<name>RL10_PYRHO</name>
<evidence type="ECO:0000255" key="1">
    <source>
        <dbReference type="HAMAP-Rule" id="MF_00280"/>
    </source>
</evidence>
<evidence type="ECO:0000256" key="2">
    <source>
        <dbReference type="SAM" id="MobiDB-lite"/>
    </source>
</evidence>
<evidence type="ECO:0000269" key="3">
    <source>
    </source>
</evidence>
<evidence type="ECO:0000269" key="4">
    <source>
    </source>
</evidence>
<evidence type="ECO:0000305" key="5"/>
<evidence type="ECO:0007829" key="6">
    <source>
        <dbReference type="PDB" id="3A1Y"/>
    </source>
</evidence>
<organism>
    <name type="scientific">Pyrococcus horikoshii (strain ATCC 700860 / DSM 12428 / JCM 9974 / NBRC 100139 / OT-3)</name>
    <dbReference type="NCBI Taxonomy" id="70601"/>
    <lineage>
        <taxon>Archaea</taxon>
        <taxon>Methanobacteriati</taxon>
        <taxon>Methanobacteriota</taxon>
        <taxon>Thermococci</taxon>
        <taxon>Thermococcales</taxon>
        <taxon>Thermococcaceae</taxon>
        <taxon>Pyrococcus</taxon>
    </lineage>
</organism>
<accession>O74109</accession>
<feature type="chain" id="PRO_0000154804" description="Large ribosomal subunit protein uL10">
    <location>
        <begin position="1"/>
        <end position="342"/>
    </location>
</feature>
<feature type="region of interest" description="Required for interaction with ribosomal protein L12 dimers">
    <location>
        <begin position="212"/>
        <end position="342"/>
    </location>
</feature>
<feature type="region of interest" description="Disordered" evidence="2">
    <location>
        <begin position="299"/>
        <end position="342"/>
    </location>
</feature>
<feature type="compositionally biased region" description="Polar residues" evidence="2">
    <location>
        <begin position="299"/>
        <end position="308"/>
    </location>
</feature>
<feature type="compositionally biased region" description="Acidic residues" evidence="2">
    <location>
        <begin position="318"/>
        <end position="333"/>
    </location>
</feature>
<feature type="mutagenesis site" description="Binds less L12, about 50% GTPase activity, about 35% GTPase activity; when associated with 243-Q--Q250 or 272-Q--Q-279." evidence="4">
    <original>LQKAYMHA</original>
    <variation>QQKAYMHQ</variation>
    <location>
        <begin position="217"/>
        <end position="224"/>
    </location>
</feature>
<feature type="mutagenesis site" description="About 65% GTPase activity; when associated with 272-Q--Q-279. About 35% GTPase activity; when associated with 217-Q--Q-224." evidence="4">
    <original>IQKAFLNA</original>
    <variation>QQKAFLNQ</variation>
    <location>
        <begin position="243"/>
        <end position="250"/>
    </location>
</feature>
<feature type="mutagenesis site" description="About 65% GTPase activity; when associated with 243-Q--Q-250. About 35% GTPase activity; when associated with 217-Q--Q-224." evidence="4">
    <original>AFRAMLLL</original>
    <variation>QFRAMLLQ</variation>
    <location>
        <begin position="272"/>
        <end position="279"/>
    </location>
</feature>
<feature type="turn" evidence="6">
    <location>
        <begin position="8"/>
        <end position="10"/>
    </location>
</feature>
<feature type="helix" evidence="6">
    <location>
        <begin position="11"/>
        <end position="19"/>
    </location>
</feature>
<feature type="strand" evidence="6">
    <location>
        <begin position="23"/>
        <end position="29"/>
    </location>
</feature>
<feature type="helix" evidence="6">
    <location>
        <begin position="35"/>
        <end position="47"/>
    </location>
</feature>
<feature type="strand" evidence="6">
    <location>
        <begin position="50"/>
        <end position="54"/>
    </location>
</feature>
<feature type="strand" evidence="6">
    <location>
        <begin position="56"/>
        <end position="59"/>
    </location>
</feature>
<feature type="helix" evidence="6">
    <location>
        <begin position="62"/>
        <end position="68"/>
    </location>
</feature>
<feature type="strand" evidence="6">
    <location>
        <begin position="78"/>
        <end position="80"/>
    </location>
</feature>
<feature type="strand" evidence="6">
    <location>
        <begin position="87"/>
        <end position="94"/>
    </location>
</feature>
<feature type="helix" evidence="6">
    <location>
        <begin position="96"/>
        <end position="105"/>
    </location>
</feature>
<feature type="strand" evidence="6">
    <location>
        <begin position="190"/>
        <end position="196"/>
    </location>
</feature>
<feature type="strand" evidence="6">
    <location>
        <begin position="199"/>
        <end position="201"/>
    </location>
</feature>
<feature type="helix" evidence="6">
    <location>
        <begin position="203"/>
        <end position="206"/>
    </location>
</feature>
<feature type="helix" evidence="6">
    <location>
        <begin position="210"/>
        <end position="231"/>
    </location>
</feature>
<feature type="turn" evidence="6">
    <location>
        <begin position="236"/>
        <end position="238"/>
    </location>
</feature>
<feature type="helix" evidence="6">
    <location>
        <begin position="239"/>
        <end position="256"/>
    </location>
</feature>
<feature type="turn" evidence="6">
    <location>
        <begin position="262"/>
        <end position="264"/>
    </location>
</feature>
<feature type="helix" evidence="6">
    <location>
        <begin position="265"/>
        <end position="280"/>
    </location>
</feature>
<sequence length="342" mass="37514">MAHVAEWKKKEVEELAKLIKSYPVIALVDVSSMPAYPLSQMRRLIRENGGLLRVSRNTLIELAIKKAAKELGKPELEKLVEYIDRGAGILVTNMNPFKLYKFLQQNRQPAPAKPGAVVPKDVVVPAGPTPLAPGPIVGQMQALGIPARIEKGKVTIQKDTTVLKAGEVITPELANILNALGIQPLEVGLDVLAVYEDGIVYTPDVLAIDEQEYIDMLQKAYMHAFNLAVNIAYPTPETIEAIIQKAFLNAKTVAIEAGYITKETIQDIIGRAFRAMLLLAQQLPEDVLDEKTKELLSAQAQVAVATQPSEEEKKEEEKTEEEEKEEEASEEEALAGLSALFG</sequence>